<name>DTD_SYNWW</name>
<organism>
    <name type="scientific">Syntrophomonas wolfei subsp. wolfei (strain DSM 2245B / Goettingen)</name>
    <dbReference type="NCBI Taxonomy" id="335541"/>
    <lineage>
        <taxon>Bacteria</taxon>
        <taxon>Bacillati</taxon>
        <taxon>Bacillota</taxon>
        <taxon>Clostridia</taxon>
        <taxon>Eubacteriales</taxon>
        <taxon>Syntrophomonadaceae</taxon>
        <taxon>Syntrophomonas</taxon>
    </lineage>
</organism>
<keyword id="KW-0963">Cytoplasm</keyword>
<keyword id="KW-0378">Hydrolase</keyword>
<keyword id="KW-1185">Reference proteome</keyword>
<keyword id="KW-0694">RNA-binding</keyword>
<keyword id="KW-0820">tRNA-binding</keyword>
<dbReference type="EC" id="3.1.1.96" evidence="1"/>
<dbReference type="EMBL" id="CP000448">
    <property type="protein sequence ID" value="ABI68128.1"/>
    <property type="molecule type" value="Genomic_DNA"/>
</dbReference>
<dbReference type="RefSeq" id="WP_011640233.1">
    <property type="nucleotide sequence ID" value="NC_008346.1"/>
</dbReference>
<dbReference type="SMR" id="Q0AYS6"/>
<dbReference type="STRING" id="335541.Swol_0807"/>
<dbReference type="KEGG" id="swo:Swol_0807"/>
<dbReference type="eggNOG" id="COG1490">
    <property type="taxonomic scope" value="Bacteria"/>
</dbReference>
<dbReference type="HOGENOM" id="CLU_076901_1_0_9"/>
<dbReference type="OrthoDB" id="9801395at2"/>
<dbReference type="Proteomes" id="UP000001968">
    <property type="component" value="Chromosome"/>
</dbReference>
<dbReference type="GO" id="GO:0005737">
    <property type="term" value="C:cytoplasm"/>
    <property type="evidence" value="ECO:0007669"/>
    <property type="project" value="UniProtKB-SubCell"/>
</dbReference>
<dbReference type="GO" id="GO:0051500">
    <property type="term" value="F:D-tyrosyl-tRNA(Tyr) deacylase activity"/>
    <property type="evidence" value="ECO:0007669"/>
    <property type="project" value="TreeGrafter"/>
</dbReference>
<dbReference type="GO" id="GO:0106026">
    <property type="term" value="F:Gly-tRNA(Ala) deacylase activity"/>
    <property type="evidence" value="ECO:0007669"/>
    <property type="project" value="UniProtKB-UniRule"/>
</dbReference>
<dbReference type="GO" id="GO:0043908">
    <property type="term" value="F:Ser(Gly)-tRNA(Ala) hydrolase activity"/>
    <property type="evidence" value="ECO:0007669"/>
    <property type="project" value="UniProtKB-UniRule"/>
</dbReference>
<dbReference type="GO" id="GO:0000049">
    <property type="term" value="F:tRNA binding"/>
    <property type="evidence" value="ECO:0007669"/>
    <property type="project" value="UniProtKB-UniRule"/>
</dbReference>
<dbReference type="GO" id="GO:0019478">
    <property type="term" value="P:D-amino acid catabolic process"/>
    <property type="evidence" value="ECO:0007669"/>
    <property type="project" value="UniProtKB-UniRule"/>
</dbReference>
<dbReference type="CDD" id="cd00563">
    <property type="entry name" value="Dtyr_deacylase"/>
    <property type="match status" value="1"/>
</dbReference>
<dbReference type="FunFam" id="3.50.80.10:FF:000001">
    <property type="entry name" value="D-aminoacyl-tRNA deacylase"/>
    <property type="match status" value="1"/>
</dbReference>
<dbReference type="Gene3D" id="3.50.80.10">
    <property type="entry name" value="D-tyrosyl-tRNA(Tyr) deacylase"/>
    <property type="match status" value="1"/>
</dbReference>
<dbReference type="HAMAP" id="MF_00518">
    <property type="entry name" value="Deacylase_Dtd"/>
    <property type="match status" value="1"/>
</dbReference>
<dbReference type="InterPro" id="IPR003732">
    <property type="entry name" value="Daa-tRNA_deacyls_DTD"/>
</dbReference>
<dbReference type="InterPro" id="IPR023509">
    <property type="entry name" value="DTD-like_sf"/>
</dbReference>
<dbReference type="NCBIfam" id="TIGR00256">
    <property type="entry name" value="D-aminoacyl-tRNA deacylase"/>
    <property type="match status" value="1"/>
</dbReference>
<dbReference type="PANTHER" id="PTHR10472:SF5">
    <property type="entry name" value="D-AMINOACYL-TRNA DEACYLASE 1"/>
    <property type="match status" value="1"/>
</dbReference>
<dbReference type="PANTHER" id="PTHR10472">
    <property type="entry name" value="D-TYROSYL-TRNA TYR DEACYLASE"/>
    <property type="match status" value="1"/>
</dbReference>
<dbReference type="Pfam" id="PF02580">
    <property type="entry name" value="Tyr_Deacylase"/>
    <property type="match status" value="1"/>
</dbReference>
<dbReference type="SUPFAM" id="SSF69500">
    <property type="entry name" value="DTD-like"/>
    <property type="match status" value="1"/>
</dbReference>
<feature type="chain" id="PRO_1000050900" description="D-aminoacyl-tRNA deacylase">
    <location>
        <begin position="1"/>
        <end position="149"/>
    </location>
</feature>
<feature type="short sequence motif" description="Gly-cisPro motif, important for rejection of L-amino acids" evidence="1">
    <location>
        <begin position="137"/>
        <end position="138"/>
    </location>
</feature>
<reference key="1">
    <citation type="journal article" date="2010" name="Environ. Microbiol.">
        <title>The genome of Syntrophomonas wolfei: new insights into syntrophic metabolism and biohydrogen production.</title>
        <authorList>
            <person name="Sieber J.R."/>
            <person name="Sims D.R."/>
            <person name="Han C."/>
            <person name="Kim E."/>
            <person name="Lykidis A."/>
            <person name="Lapidus A.L."/>
            <person name="McDonnald E."/>
            <person name="Rohlin L."/>
            <person name="Culley D.E."/>
            <person name="Gunsalus R."/>
            <person name="McInerney M.J."/>
        </authorList>
    </citation>
    <scope>NUCLEOTIDE SEQUENCE [LARGE SCALE GENOMIC DNA]</scope>
    <source>
        <strain>DSM 2245B / Goettingen</strain>
    </source>
</reference>
<sequence>MRAVVQRVSFSEVRVEGKLRGRIKQGLMVLLGIKKGDSKAEGDYLLEKIVNLRIFPDEEGKMNRSLLDIEGEILLVSQFTLYGDARKGRRPSFSAAELPELAEALFDYCVDGLRQRGVQVETGTFGAEMLLSIENDGPCTILLDSEKLF</sequence>
<comment type="function">
    <text evidence="1">An aminoacyl-tRNA editing enzyme that deacylates mischarged D-aminoacyl-tRNAs. Also deacylates mischarged glycyl-tRNA(Ala), protecting cells against glycine mischarging by AlaRS. Acts via tRNA-based rather than protein-based catalysis; rejects L-amino acids rather than detecting D-amino acids in the active site. By recycling D-aminoacyl-tRNA to D-amino acids and free tRNA molecules, this enzyme counteracts the toxicity associated with the formation of D-aminoacyl-tRNA entities in vivo and helps enforce protein L-homochirality.</text>
</comment>
<comment type="catalytic activity">
    <reaction evidence="1">
        <text>glycyl-tRNA(Ala) + H2O = tRNA(Ala) + glycine + H(+)</text>
        <dbReference type="Rhea" id="RHEA:53744"/>
        <dbReference type="Rhea" id="RHEA-COMP:9657"/>
        <dbReference type="Rhea" id="RHEA-COMP:13640"/>
        <dbReference type="ChEBI" id="CHEBI:15377"/>
        <dbReference type="ChEBI" id="CHEBI:15378"/>
        <dbReference type="ChEBI" id="CHEBI:57305"/>
        <dbReference type="ChEBI" id="CHEBI:78442"/>
        <dbReference type="ChEBI" id="CHEBI:78522"/>
        <dbReference type="EC" id="3.1.1.96"/>
    </reaction>
</comment>
<comment type="catalytic activity">
    <reaction evidence="1">
        <text>a D-aminoacyl-tRNA + H2O = a tRNA + a D-alpha-amino acid + H(+)</text>
        <dbReference type="Rhea" id="RHEA:13953"/>
        <dbReference type="Rhea" id="RHEA-COMP:10123"/>
        <dbReference type="Rhea" id="RHEA-COMP:10124"/>
        <dbReference type="ChEBI" id="CHEBI:15377"/>
        <dbReference type="ChEBI" id="CHEBI:15378"/>
        <dbReference type="ChEBI" id="CHEBI:59871"/>
        <dbReference type="ChEBI" id="CHEBI:78442"/>
        <dbReference type="ChEBI" id="CHEBI:79333"/>
        <dbReference type="EC" id="3.1.1.96"/>
    </reaction>
</comment>
<comment type="subunit">
    <text evidence="1">Homodimer.</text>
</comment>
<comment type="subcellular location">
    <subcellularLocation>
        <location evidence="1">Cytoplasm</location>
    </subcellularLocation>
</comment>
<comment type="domain">
    <text evidence="1">A Gly-cisPro motif from one monomer fits into the active site of the other monomer to allow specific chiral rejection of L-amino acids.</text>
</comment>
<comment type="similarity">
    <text evidence="1">Belongs to the DTD family.</text>
</comment>
<accession>Q0AYS6</accession>
<gene>
    <name evidence="1" type="primary">dtd</name>
    <name type="ordered locus">Swol_0807</name>
</gene>
<proteinExistence type="inferred from homology"/>
<protein>
    <recommendedName>
        <fullName evidence="1">D-aminoacyl-tRNA deacylase</fullName>
        <shortName evidence="1">DTD</shortName>
        <ecNumber evidence="1">3.1.1.96</ecNumber>
    </recommendedName>
    <alternativeName>
        <fullName evidence="1">Gly-tRNA(Ala) deacylase</fullName>
    </alternativeName>
</protein>
<evidence type="ECO:0000255" key="1">
    <source>
        <dbReference type="HAMAP-Rule" id="MF_00518"/>
    </source>
</evidence>